<comment type="function">
    <text evidence="1">One of several proteins that assist in the late maturation steps of the functional core of the 30S ribosomal subunit. Associates with free 30S ribosomal subunits (but not with 30S subunits that are part of 70S ribosomes or polysomes). Required for efficient processing of 16S rRNA. May interact with the 5'-terminal helix region of 16S rRNA.</text>
</comment>
<comment type="subunit">
    <text evidence="1">Monomer. Binds 30S ribosomal subunits, but not 50S ribosomal subunits or 70S ribosomes.</text>
</comment>
<comment type="subcellular location">
    <subcellularLocation>
        <location evidence="1">Cytoplasm</location>
    </subcellularLocation>
</comment>
<comment type="similarity">
    <text evidence="1">Belongs to the RbfA family.</text>
</comment>
<keyword id="KW-0963">Cytoplasm</keyword>
<keyword id="KW-0690">Ribosome biogenesis</keyword>
<organism>
    <name type="scientific">Ectopseudomonas mendocina (strain ymp)</name>
    <name type="common">Pseudomonas mendocina</name>
    <dbReference type="NCBI Taxonomy" id="399739"/>
    <lineage>
        <taxon>Bacteria</taxon>
        <taxon>Pseudomonadati</taxon>
        <taxon>Pseudomonadota</taxon>
        <taxon>Gammaproteobacteria</taxon>
        <taxon>Pseudomonadales</taxon>
        <taxon>Pseudomonadaceae</taxon>
        <taxon>Ectopseudomonas</taxon>
    </lineage>
</organism>
<accession>A4XYD9</accession>
<sequence length="129" mass="14530">MAKDYSRTQRIGDQMQRELAVLIQREIKDPRLGLVTITAVDVSRDLSHAKVFITVMGKDDDAEQIKLNLEILGEAAGYLRMLLGKSMKVRTIPQLHFHYDASIRRGAELSALIERAVAEDRKHQDGSEG</sequence>
<dbReference type="EMBL" id="CP000680">
    <property type="protein sequence ID" value="ABP86355.1"/>
    <property type="molecule type" value="Genomic_DNA"/>
</dbReference>
<dbReference type="SMR" id="A4XYD9"/>
<dbReference type="STRING" id="399739.Pmen_3607"/>
<dbReference type="KEGG" id="pmy:Pmen_3607"/>
<dbReference type="PATRIC" id="fig|399739.8.peg.3656"/>
<dbReference type="eggNOG" id="COG0858">
    <property type="taxonomic scope" value="Bacteria"/>
</dbReference>
<dbReference type="HOGENOM" id="CLU_089475_5_0_6"/>
<dbReference type="OrthoDB" id="307788at2"/>
<dbReference type="GO" id="GO:0005829">
    <property type="term" value="C:cytosol"/>
    <property type="evidence" value="ECO:0007669"/>
    <property type="project" value="TreeGrafter"/>
</dbReference>
<dbReference type="GO" id="GO:0043024">
    <property type="term" value="F:ribosomal small subunit binding"/>
    <property type="evidence" value="ECO:0007669"/>
    <property type="project" value="TreeGrafter"/>
</dbReference>
<dbReference type="GO" id="GO:0030490">
    <property type="term" value="P:maturation of SSU-rRNA"/>
    <property type="evidence" value="ECO:0007669"/>
    <property type="project" value="UniProtKB-UniRule"/>
</dbReference>
<dbReference type="Gene3D" id="3.30.300.20">
    <property type="match status" value="1"/>
</dbReference>
<dbReference type="HAMAP" id="MF_00003">
    <property type="entry name" value="RbfA"/>
    <property type="match status" value="1"/>
</dbReference>
<dbReference type="InterPro" id="IPR015946">
    <property type="entry name" value="KH_dom-like_a/b"/>
</dbReference>
<dbReference type="InterPro" id="IPR000238">
    <property type="entry name" value="RbfA"/>
</dbReference>
<dbReference type="InterPro" id="IPR023799">
    <property type="entry name" value="RbfA_dom_sf"/>
</dbReference>
<dbReference type="InterPro" id="IPR020053">
    <property type="entry name" value="Ribosome-bd_factorA_CS"/>
</dbReference>
<dbReference type="NCBIfam" id="TIGR00082">
    <property type="entry name" value="rbfA"/>
    <property type="match status" value="1"/>
</dbReference>
<dbReference type="PANTHER" id="PTHR33515">
    <property type="entry name" value="RIBOSOME-BINDING FACTOR A, CHLOROPLASTIC-RELATED"/>
    <property type="match status" value="1"/>
</dbReference>
<dbReference type="PANTHER" id="PTHR33515:SF1">
    <property type="entry name" value="RIBOSOME-BINDING FACTOR A, CHLOROPLASTIC-RELATED"/>
    <property type="match status" value="1"/>
</dbReference>
<dbReference type="Pfam" id="PF02033">
    <property type="entry name" value="RBFA"/>
    <property type="match status" value="1"/>
</dbReference>
<dbReference type="SUPFAM" id="SSF89919">
    <property type="entry name" value="Ribosome-binding factor A, RbfA"/>
    <property type="match status" value="1"/>
</dbReference>
<dbReference type="PROSITE" id="PS01319">
    <property type="entry name" value="RBFA"/>
    <property type="match status" value="1"/>
</dbReference>
<name>RBFA_ECTM1</name>
<gene>
    <name evidence="1" type="primary">rbfA</name>
    <name type="ordered locus">Pmen_3607</name>
</gene>
<reference key="1">
    <citation type="submission" date="2007-04" db="EMBL/GenBank/DDBJ databases">
        <title>Complete sequence of Pseudomonas mendocina ymp.</title>
        <authorList>
            <consortium name="US DOE Joint Genome Institute"/>
            <person name="Copeland A."/>
            <person name="Lucas S."/>
            <person name="Lapidus A."/>
            <person name="Barry K."/>
            <person name="Glavina del Rio T."/>
            <person name="Dalin E."/>
            <person name="Tice H."/>
            <person name="Pitluck S."/>
            <person name="Kiss H."/>
            <person name="Brettin T."/>
            <person name="Detter J.C."/>
            <person name="Bruce D."/>
            <person name="Han C."/>
            <person name="Schmutz J."/>
            <person name="Larimer F."/>
            <person name="Land M."/>
            <person name="Hauser L."/>
            <person name="Kyrpides N."/>
            <person name="Mikhailova N."/>
            <person name="Hersman L."/>
            <person name="Dubois J."/>
            <person name="Maurice P."/>
            <person name="Richardson P."/>
        </authorList>
    </citation>
    <scope>NUCLEOTIDE SEQUENCE [LARGE SCALE GENOMIC DNA]</scope>
    <source>
        <strain>ymp</strain>
    </source>
</reference>
<feature type="chain" id="PRO_1000000177" description="Ribosome-binding factor A">
    <location>
        <begin position="1"/>
        <end position="129"/>
    </location>
</feature>
<proteinExistence type="inferred from homology"/>
<evidence type="ECO:0000255" key="1">
    <source>
        <dbReference type="HAMAP-Rule" id="MF_00003"/>
    </source>
</evidence>
<protein>
    <recommendedName>
        <fullName evidence="1">Ribosome-binding factor A</fullName>
    </recommendedName>
</protein>